<reference key="1">
    <citation type="submission" date="2006-08" db="EMBL/GenBank/DDBJ databases">
        <title>Complete sequence of chromosome 1 of Burkholderia cepacia AMMD.</title>
        <authorList>
            <person name="Copeland A."/>
            <person name="Lucas S."/>
            <person name="Lapidus A."/>
            <person name="Barry K."/>
            <person name="Detter J.C."/>
            <person name="Glavina del Rio T."/>
            <person name="Hammon N."/>
            <person name="Israni S."/>
            <person name="Pitluck S."/>
            <person name="Bruce D."/>
            <person name="Chain P."/>
            <person name="Malfatti S."/>
            <person name="Shin M."/>
            <person name="Vergez L."/>
            <person name="Schmutz J."/>
            <person name="Larimer F."/>
            <person name="Land M."/>
            <person name="Hauser L."/>
            <person name="Kyrpides N."/>
            <person name="Kim E."/>
            <person name="Parke J."/>
            <person name="Coenye T."/>
            <person name="Konstantinidis K."/>
            <person name="Ramette A."/>
            <person name="Tiedje J."/>
            <person name="Richardson P."/>
        </authorList>
    </citation>
    <scope>NUCLEOTIDE SEQUENCE [LARGE SCALE GENOMIC DNA]</scope>
    <source>
        <strain>ATCC BAA-244 / DSM 16087 / CCUG 44356 / LMG 19182 / AMMD</strain>
    </source>
</reference>
<feature type="chain" id="PRO_0000386766" description="Ribosomal RNA small subunit methyltransferase H">
    <location>
        <begin position="1"/>
        <end position="313"/>
    </location>
</feature>
<feature type="binding site" evidence="1">
    <location>
        <begin position="35"/>
        <end position="37"/>
    </location>
    <ligand>
        <name>S-adenosyl-L-methionine</name>
        <dbReference type="ChEBI" id="CHEBI:59789"/>
    </ligand>
</feature>
<feature type="binding site" evidence="1">
    <location>
        <position position="55"/>
    </location>
    <ligand>
        <name>S-adenosyl-L-methionine</name>
        <dbReference type="ChEBI" id="CHEBI:59789"/>
    </ligand>
</feature>
<feature type="binding site" evidence="1">
    <location>
        <position position="79"/>
    </location>
    <ligand>
        <name>S-adenosyl-L-methionine</name>
        <dbReference type="ChEBI" id="CHEBI:59789"/>
    </ligand>
</feature>
<feature type="binding site" evidence="1">
    <location>
        <position position="100"/>
    </location>
    <ligand>
        <name>S-adenosyl-L-methionine</name>
        <dbReference type="ChEBI" id="CHEBI:59789"/>
    </ligand>
</feature>
<feature type="binding site" evidence="1">
    <location>
        <position position="107"/>
    </location>
    <ligand>
        <name>S-adenosyl-L-methionine</name>
        <dbReference type="ChEBI" id="CHEBI:59789"/>
    </ligand>
</feature>
<organism>
    <name type="scientific">Burkholderia ambifaria (strain ATCC BAA-244 / DSM 16087 / CCUG 44356 / LMG 19182 / AMMD)</name>
    <name type="common">Burkholderia cepacia (strain AMMD)</name>
    <dbReference type="NCBI Taxonomy" id="339670"/>
    <lineage>
        <taxon>Bacteria</taxon>
        <taxon>Pseudomonadati</taxon>
        <taxon>Pseudomonadota</taxon>
        <taxon>Betaproteobacteria</taxon>
        <taxon>Burkholderiales</taxon>
        <taxon>Burkholderiaceae</taxon>
        <taxon>Burkholderia</taxon>
        <taxon>Burkholderia cepacia complex</taxon>
    </lineage>
</organism>
<protein>
    <recommendedName>
        <fullName evidence="1">Ribosomal RNA small subunit methyltransferase H</fullName>
        <ecNumber evidence="1">2.1.1.199</ecNumber>
    </recommendedName>
    <alternativeName>
        <fullName evidence="1">16S rRNA m(4)C1402 methyltransferase</fullName>
    </alternativeName>
    <alternativeName>
        <fullName evidence="1">rRNA (cytosine-N(4)-)-methyltransferase RsmH</fullName>
    </alternativeName>
</protein>
<comment type="function">
    <text evidence="1">Specifically methylates the N4 position of cytidine in position 1402 (C1402) of 16S rRNA.</text>
</comment>
<comment type="catalytic activity">
    <reaction evidence="1">
        <text>cytidine(1402) in 16S rRNA + S-adenosyl-L-methionine = N(4)-methylcytidine(1402) in 16S rRNA + S-adenosyl-L-homocysteine + H(+)</text>
        <dbReference type="Rhea" id="RHEA:42928"/>
        <dbReference type="Rhea" id="RHEA-COMP:10286"/>
        <dbReference type="Rhea" id="RHEA-COMP:10287"/>
        <dbReference type="ChEBI" id="CHEBI:15378"/>
        <dbReference type="ChEBI" id="CHEBI:57856"/>
        <dbReference type="ChEBI" id="CHEBI:59789"/>
        <dbReference type="ChEBI" id="CHEBI:74506"/>
        <dbReference type="ChEBI" id="CHEBI:82748"/>
        <dbReference type="EC" id="2.1.1.199"/>
    </reaction>
</comment>
<comment type="subcellular location">
    <subcellularLocation>
        <location evidence="1">Cytoplasm</location>
    </subcellularLocation>
</comment>
<comment type="similarity">
    <text evidence="1">Belongs to the methyltransferase superfamily. RsmH family.</text>
</comment>
<name>RSMH_BURCM</name>
<dbReference type="EC" id="2.1.1.199" evidence="1"/>
<dbReference type="EMBL" id="CP000440">
    <property type="protein sequence ID" value="ABI86014.1"/>
    <property type="molecule type" value="Genomic_DNA"/>
</dbReference>
<dbReference type="RefSeq" id="WP_011655886.1">
    <property type="nucleotide sequence ID" value="NC_008390.1"/>
</dbReference>
<dbReference type="SMR" id="Q0BIK9"/>
<dbReference type="GeneID" id="93084128"/>
<dbReference type="KEGG" id="bam:Bamb_0455"/>
<dbReference type="PATRIC" id="fig|339670.21.peg.1151"/>
<dbReference type="eggNOG" id="COG0275">
    <property type="taxonomic scope" value="Bacteria"/>
</dbReference>
<dbReference type="Proteomes" id="UP000000662">
    <property type="component" value="Chromosome 1"/>
</dbReference>
<dbReference type="GO" id="GO:0005737">
    <property type="term" value="C:cytoplasm"/>
    <property type="evidence" value="ECO:0007669"/>
    <property type="project" value="UniProtKB-SubCell"/>
</dbReference>
<dbReference type="GO" id="GO:0071424">
    <property type="term" value="F:rRNA (cytosine-N4-)-methyltransferase activity"/>
    <property type="evidence" value="ECO:0007669"/>
    <property type="project" value="UniProtKB-UniRule"/>
</dbReference>
<dbReference type="GO" id="GO:0070475">
    <property type="term" value="P:rRNA base methylation"/>
    <property type="evidence" value="ECO:0007669"/>
    <property type="project" value="UniProtKB-UniRule"/>
</dbReference>
<dbReference type="Gene3D" id="1.10.150.170">
    <property type="entry name" value="Putative methyltransferase TM0872, insert domain"/>
    <property type="match status" value="1"/>
</dbReference>
<dbReference type="Gene3D" id="3.40.50.150">
    <property type="entry name" value="Vaccinia Virus protein VP39"/>
    <property type="match status" value="1"/>
</dbReference>
<dbReference type="HAMAP" id="MF_01007">
    <property type="entry name" value="16SrRNA_methyltr_H"/>
    <property type="match status" value="1"/>
</dbReference>
<dbReference type="InterPro" id="IPR002903">
    <property type="entry name" value="RsmH"/>
</dbReference>
<dbReference type="InterPro" id="IPR023397">
    <property type="entry name" value="SAM-dep_MeTrfase_MraW_recog"/>
</dbReference>
<dbReference type="InterPro" id="IPR029063">
    <property type="entry name" value="SAM-dependent_MTases_sf"/>
</dbReference>
<dbReference type="NCBIfam" id="TIGR00006">
    <property type="entry name" value="16S rRNA (cytosine(1402)-N(4))-methyltransferase RsmH"/>
    <property type="match status" value="1"/>
</dbReference>
<dbReference type="PANTHER" id="PTHR11265:SF0">
    <property type="entry name" value="12S RRNA N4-METHYLCYTIDINE METHYLTRANSFERASE"/>
    <property type="match status" value="1"/>
</dbReference>
<dbReference type="PANTHER" id="PTHR11265">
    <property type="entry name" value="S-ADENOSYL-METHYLTRANSFERASE MRAW"/>
    <property type="match status" value="1"/>
</dbReference>
<dbReference type="Pfam" id="PF01795">
    <property type="entry name" value="Methyltransf_5"/>
    <property type="match status" value="1"/>
</dbReference>
<dbReference type="PIRSF" id="PIRSF004486">
    <property type="entry name" value="MraW"/>
    <property type="match status" value="1"/>
</dbReference>
<dbReference type="SUPFAM" id="SSF81799">
    <property type="entry name" value="Putative methyltransferase TM0872, insert domain"/>
    <property type="match status" value="1"/>
</dbReference>
<dbReference type="SUPFAM" id="SSF53335">
    <property type="entry name" value="S-adenosyl-L-methionine-dependent methyltransferases"/>
    <property type="match status" value="1"/>
</dbReference>
<keyword id="KW-0963">Cytoplasm</keyword>
<keyword id="KW-0489">Methyltransferase</keyword>
<keyword id="KW-0698">rRNA processing</keyword>
<keyword id="KW-0949">S-adenosyl-L-methionine</keyword>
<keyword id="KW-0808">Transferase</keyword>
<sequence>MGNELQHRTVLLDEAVESLVTRPDGIYVDGTFGRGGHSRAVLARLAEGGRLIAFDKDPRAIETAQRIEDARFSIVHDSFASMRDALAARGIEKVSGVLLDLGVSSPQVDDPARGFSFRADGPLDMRMDPTRGESAAEWLARASVQELTEVIRDYGEERFAFQIAKALVARRAESDRLGPLDTTGELAQIVGHVVKTREKGKDPATRTFQAIRIHVNQELADLQVVLDAALSLLEQGGRLVVISFHSLEDRIVKRFMQAHASAPAVDRRLPIRAVDLPSPPLKIISRQFPSEAEVVANPRARSAVMRIAERVTP</sequence>
<proteinExistence type="inferred from homology"/>
<evidence type="ECO:0000255" key="1">
    <source>
        <dbReference type="HAMAP-Rule" id="MF_01007"/>
    </source>
</evidence>
<accession>Q0BIK9</accession>
<gene>
    <name evidence="1" type="primary">rsmH</name>
    <name type="synonym">mraW</name>
    <name type="ordered locus">Bamb_0455</name>
</gene>